<accession>A5WD02</accession>
<reference key="1">
    <citation type="submission" date="2007-05" db="EMBL/GenBank/DDBJ databases">
        <title>Complete sequence of chromosome of Psychrobacter sp. PRwf-1.</title>
        <authorList>
            <consortium name="US DOE Joint Genome Institute"/>
            <person name="Copeland A."/>
            <person name="Lucas S."/>
            <person name="Lapidus A."/>
            <person name="Barry K."/>
            <person name="Detter J.C."/>
            <person name="Glavina del Rio T."/>
            <person name="Hammon N."/>
            <person name="Israni S."/>
            <person name="Dalin E."/>
            <person name="Tice H."/>
            <person name="Pitluck S."/>
            <person name="Chain P."/>
            <person name="Malfatti S."/>
            <person name="Shin M."/>
            <person name="Vergez L."/>
            <person name="Schmutz J."/>
            <person name="Larimer F."/>
            <person name="Land M."/>
            <person name="Hauser L."/>
            <person name="Kyrpides N."/>
            <person name="Kim E."/>
            <person name="Tiedje J."/>
            <person name="Richardson P."/>
        </authorList>
    </citation>
    <scope>NUCLEOTIDE SEQUENCE [LARGE SCALE GENOMIC DNA]</scope>
    <source>
        <strain>PRwf-1</strain>
    </source>
</reference>
<feature type="chain" id="PRO_0000356621" description="Large ribosomal subunit protein bL33">
    <location>
        <begin position="1"/>
        <end position="51"/>
    </location>
</feature>
<comment type="similarity">
    <text evidence="1">Belongs to the bacterial ribosomal protein bL33 family.</text>
</comment>
<proteinExistence type="inferred from homology"/>
<keyword id="KW-0687">Ribonucleoprotein</keyword>
<keyword id="KW-0689">Ribosomal protein</keyword>
<name>RL33_PSYWF</name>
<gene>
    <name evidence="1" type="primary">rpmG</name>
    <name type="ordered locus">PsycPRwf_0588</name>
</gene>
<dbReference type="EMBL" id="CP000713">
    <property type="protein sequence ID" value="ABQ93543.1"/>
    <property type="molecule type" value="Genomic_DNA"/>
</dbReference>
<dbReference type="SMR" id="A5WD02"/>
<dbReference type="STRING" id="349106.PsycPRwf_0588"/>
<dbReference type="KEGG" id="prw:PsycPRwf_0588"/>
<dbReference type="eggNOG" id="COG0267">
    <property type="taxonomic scope" value="Bacteria"/>
</dbReference>
<dbReference type="HOGENOM" id="CLU_190949_1_1_6"/>
<dbReference type="GO" id="GO:0022625">
    <property type="term" value="C:cytosolic large ribosomal subunit"/>
    <property type="evidence" value="ECO:0007669"/>
    <property type="project" value="TreeGrafter"/>
</dbReference>
<dbReference type="GO" id="GO:0003735">
    <property type="term" value="F:structural constituent of ribosome"/>
    <property type="evidence" value="ECO:0007669"/>
    <property type="project" value="InterPro"/>
</dbReference>
<dbReference type="GO" id="GO:0006412">
    <property type="term" value="P:translation"/>
    <property type="evidence" value="ECO:0007669"/>
    <property type="project" value="UniProtKB-UniRule"/>
</dbReference>
<dbReference type="FunFam" id="2.20.28.120:FF:000001">
    <property type="entry name" value="50S ribosomal protein L33"/>
    <property type="match status" value="1"/>
</dbReference>
<dbReference type="Gene3D" id="2.20.28.120">
    <property type="entry name" value="Ribosomal protein L33"/>
    <property type="match status" value="1"/>
</dbReference>
<dbReference type="HAMAP" id="MF_00294">
    <property type="entry name" value="Ribosomal_bL33"/>
    <property type="match status" value="1"/>
</dbReference>
<dbReference type="InterPro" id="IPR001705">
    <property type="entry name" value="Ribosomal_bL33"/>
</dbReference>
<dbReference type="InterPro" id="IPR018264">
    <property type="entry name" value="Ribosomal_bL33_CS"/>
</dbReference>
<dbReference type="InterPro" id="IPR038584">
    <property type="entry name" value="Ribosomal_bL33_sf"/>
</dbReference>
<dbReference type="InterPro" id="IPR011332">
    <property type="entry name" value="Ribosomal_zn-bd"/>
</dbReference>
<dbReference type="NCBIfam" id="NF001860">
    <property type="entry name" value="PRK00595.1"/>
    <property type="match status" value="1"/>
</dbReference>
<dbReference type="NCBIfam" id="TIGR01023">
    <property type="entry name" value="rpmG_bact"/>
    <property type="match status" value="1"/>
</dbReference>
<dbReference type="PANTHER" id="PTHR15238">
    <property type="entry name" value="54S RIBOSOMAL PROTEIN L39, MITOCHONDRIAL"/>
    <property type="match status" value="1"/>
</dbReference>
<dbReference type="PANTHER" id="PTHR15238:SF1">
    <property type="entry name" value="LARGE RIBOSOMAL SUBUNIT PROTEIN BL33M"/>
    <property type="match status" value="1"/>
</dbReference>
<dbReference type="Pfam" id="PF00471">
    <property type="entry name" value="Ribosomal_L33"/>
    <property type="match status" value="1"/>
</dbReference>
<dbReference type="SUPFAM" id="SSF57829">
    <property type="entry name" value="Zn-binding ribosomal proteins"/>
    <property type="match status" value="1"/>
</dbReference>
<dbReference type="PROSITE" id="PS00582">
    <property type="entry name" value="RIBOSOMAL_L33"/>
    <property type="match status" value="1"/>
</dbReference>
<sequence>MRDKIKLVSTAGTGYFYTTTKNKRTMPGKMEIKKFDPKVRQHVIFKEAKIK</sequence>
<organism>
    <name type="scientific">Psychrobacter sp. (strain PRwf-1)</name>
    <dbReference type="NCBI Taxonomy" id="349106"/>
    <lineage>
        <taxon>Bacteria</taxon>
        <taxon>Pseudomonadati</taxon>
        <taxon>Pseudomonadota</taxon>
        <taxon>Gammaproteobacteria</taxon>
        <taxon>Moraxellales</taxon>
        <taxon>Moraxellaceae</taxon>
        <taxon>Psychrobacter</taxon>
    </lineage>
</organism>
<protein>
    <recommendedName>
        <fullName evidence="1">Large ribosomal subunit protein bL33</fullName>
    </recommendedName>
    <alternativeName>
        <fullName evidence="2">50S ribosomal protein L33</fullName>
    </alternativeName>
</protein>
<evidence type="ECO:0000255" key="1">
    <source>
        <dbReference type="HAMAP-Rule" id="MF_00294"/>
    </source>
</evidence>
<evidence type="ECO:0000305" key="2"/>